<gene>
    <name type="primary">trpF</name>
    <name type="ordered locus">APE_2547</name>
</gene>
<sequence>MVKVKICGVKKLESALQLDGLVDYIGFVHSLLGGPRSVPLEAARIMASQIEKSKTVLVVHGSSPSYAAAAADGFDVLQYHEPLLPSSAASLQATLDPLGVTLAVVVEYTGSAWKPQEPCGYINELNKEGVEPEYILLDTTKGLRDRIPLNEAAKASRCSHRVGLAGGLTPRDACKAVETGVSLIDVSRGVETGVPGVKDPLLSAELIMGAKRCSS</sequence>
<dbReference type="EC" id="5.3.1.24"/>
<dbReference type="EMBL" id="BA000002">
    <property type="protein sequence ID" value="BAA81564.1"/>
    <property type="molecule type" value="Genomic_DNA"/>
</dbReference>
<dbReference type="PIR" id="D72488">
    <property type="entry name" value="D72488"/>
</dbReference>
<dbReference type="SMR" id="Q9Y8T6"/>
<dbReference type="STRING" id="272557.APE_2547"/>
<dbReference type="EnsemblBacteria" id="BAA81564">
    <property type="protein sequence ID" value="BAA81564"/>
    <property type="gene ID" value="APE_2547"/>
</dbReference>
<dbReference type="KEGG" id="ape:APE_2547"/>
<dbReference type="PATRIC" id="fig|272557.25.peg.1691"/>
<dbReference type="eggNOG" id="arCOG01983">
    <property type="taxonomic scope" value="Archaea"/>
</dbReference>
<dbReference type="UniPathway" id="UPA00035">
    <property type="reaction ID" value="UER00042"/>
</dbReference>
<dbReference type="Proteomes" id="UP000002518">
    <property type="component" value="Chromosome"/>
</dbReference>
<dbReference type="GO" id="GO:0004640">
    <property type="term" value="F:phosphoribosylanthranilate isomerase activity"/>
    <property type="evidence" value="ECO:0007669"/>
    <property type="project" value="UniProtKB-UniRule"/>
</dbReference>
<dbReference type="GO" id="GO:0000162">
    <property type="term" value="P:L-tryptophan biosynthetic process"/>
    <property type="evidence" value="ECO:0007669"/>
    <property type="project" value="UniProtKB-UniRule"/>
</dbReference>
<dbReference type="Gene3D" id="3.20.20.70">
    <property type="entry name" value="Aldolase class I"/>
    <property type="match status" value="1"/>
</dbReference>
<dbReference type="HAMAP" id="MF_00135">
    <property type="entry name" value="PRAI"/>
    <property type="match status" value="1"/>
</dbReference>
<dbReference type="InterPro" id="IPR013785">
    <property type="entry name" value="Aldolase_TIM"/>
</dbReference>
<dbReference type="InterPro" id="IPR001240">
    <property type="entry name" value="PRAI_dom"/>
</dbReference>
<dbReference type="InterPro" id="IPR011060">
    <property type="entry name" value="RibuloseP-bd_barrel"/>
</dbReference>
<dbReference type="InterPro" id="IPR044643">
    <property type="entry name" value="TrpF_fam"/>
</dbReference>
<dbReference type="PANTHER" id="PTHR42894">
    <property type="entry name" value="N-(5'-PHOSPHORIBOSYL)ANTHRANILATE ISOMERASE"/>
    <property type="match status" value="1"/>
</dbReference>
<dbReference type="PANTHER" id="PTHR42894:SF1">
    <property type="entry name" value="N-(5'-PHOSPHORIBOSYL)ANTHRANILATE ISOMERASE"/>
    <property type="match status" value="1"/>
</dbReference>
<dbReference type="Pfam" id="PF00697">
    <property type="entry name" value="PRAI"/>
    <property type="match status" value="1"/>
</dbReference>
<dbReference type="SUPFAM" id="SSF51366">
    <property type="entry name" value="Ribulose-phoshate binding barrel"/>
    <property type="match status" value="1"/>
</dbReference>
<feature type="chain" id="PRO_0000154397" description="N-(5'-phosphoribosyl)anthranilate isomerase">
    <location>
        <begin position="1"/>
        <end position="215"/>
    </location>
</feature>
<evidence type="ECO:0000305" key="1"/>
<reference key="1">
    <citation type="journal article" date="1999" name="DNA Res.">
        <title>Complete genome sequence of an aerobic hyper-thermophilic crenarchaeon, Aeropyrum pernix K1.</title>
        <authorList>
            <person name="Kawarabayasi Y."/>
            <person name="Hino Y."/>
            <person name="Horikawa H."/>
            <person name="Yamazaki S."/>
            <person name="Haikawa Y."/>
            <person name="Jin-no K."/>
            <person name="Takahashi M."/>
            <person name="Sekine M."/>
            <person name="Baba S."/>
            <person name="Ankai A."/>
            <person name="Kosugi H."/>
            <person name="Hosoyama A."/>
            <person name="Fukui S."/>
            <person name="Nagai Y."/>
            <person name="Nishijima K."/>
            <person name="Nakazawa H."/>
            <person name="Takamiya M."/>
            <person name="Masuda S."/>
            <person name="Funahashi T."/>
            <person name="Tanaka T."/>
            <person name="Kudoh Y."/>
            <person name="Yamazaki J."/>
            <person name="Kushida N."/>
            <person name="Oguchi A."/>
            <person name="Aoki K."/>
            <person name="Kubota K."/>
            <person name="Nakamura Y."/>
            <person name="Nomura N."/>
            <person name="Sako Y."/>
            <person name="Kikuchi H."/>
        </authorList>
    </citation>
    <scope>NUCLEOTIDE SEQUENCE [LARGE SCALE GENOMIC DNA]</scope>
    <source>
        <strain>ATCC 700893 / DSM 11879 / JCM 9820 / NBRC 100138 / K1</strain>
    </source>
</reference>
<protein>
    <recommendedName>
        <fullName>N-(5'-phosphoribosyl)anthranilate isomerase</fullName>
        <shortName>PRAI</shortName>
        <ecNumber>5.3.1.24</ecNumber>
    </recommendedName>
</protein>
<name>TRPF_AERPE</name>
<organism>
    <name type="scientific">Aeropyrum pernix (strain ATCC 700893 / DSM 11879 / JCM 9820 / NBRC 100138 / K1)</name>
    <dbReference type="NCBI Taxonomy" id="272557"/>
    <lineage>
        <taxon>Archaea</taxon>
        <taxon>Thermoproteota</taxon>
        <taxon>Thermoprotei</taxon>
        <taxon>Desulfurococcales</taxon>
        <taxon>Desulfurococcaceae</taxon>
        <taxon>Aeropyrum</taxon>
    </lineage>
</organism>
<keyword id="KW-0028">Amino-acid biosynthesis</keyword>
<keyword id="KW-0057">Aromatic amino acid biosynthesis</keyword>
<keyword id="KW-0413">Isomerase</keyword>
<keyword id="KW-1185">Reference proteome</keyword>
<keyword id="KW-0822">Tryptophan biosynthesis</keyword>
<proteinExistence type="inferred from homology"/>
<comment type="catalytic activity">
    <reaction>
        <text>N-(5-phospho-beta-D-ribosyl)anthranilate = 1-(2-carboxyphenylamino)-1-deoxy-D-ribulose 5-phosphate</text>
        <dbReference type="Rhea" id="RHEA:21540"/>
        <dbReference type="ChEBI" id="CHEBI:18277"/>
        <dbReference type="ChEBI" id="CHEBI:58613"/>
        <dbReference type="EC" id="5.3.1.24"/>
    </reaction>
</comment>
<comment type="pathway">
    <text>Amino-acid biosynthesis; L-tryptophan biosynthesis; L-tryptophan from chorismate: step 3/5.</text>
</comment>
<comment type="similarity">
    <text evidence="1">Belongs to the TrpF family.</text>
</comment>
<accession>Q9Y8T6</accession>